<reference key="1">
    <citation type="journal article" date="2023" name="Nat. Chem. Biol.">
        <title>Genome mining for unknown-unknown natural products.</title>
        <authorList>
            <person name="Yee D.A."/>
            <person name="Niwa K."/>
            <person name="Perlatti B."/>
            <person name="Chen M."/>
            <person name="Li Y."/>
            <person name="Tang Y."/>
        </authorList>
    </citation>
    <scope>NUCLEOTIDE SEQUENCE [GENOMIC DNA]</scope>
    <scope>FUNCTION</scope>
    <scope>CATALYTIC ACTIVITY</scope>
    <scope>DOMAIN</scope>
    <scope>MUTAGENESIS OF CYS-193; TYR-392; ASP-428; ASP-429; GLU-432 AND TYR-515</scope>
    <scope>PATHWAY</scope>
    <source>
        <strain>dI-29</strain>
    </source>
</reference>
<feature type="chain" id="PRO_0000461001" description="Arginine-containing cyclodipeptide synthase avaA">
    <location>
        <begin position="1"/>
        <end position="541"/>
    </location>
</feature>
<feature type="short sequence motif" description="Conserved DDXXE motif" evidence="1">
    <location>
        <begin position="428"/>
        <end position="432"/>
    </location>
</feature>
<feature type="mutagenesis site" description="Leads to complete loss of cyclodipeptide formation." evidence="1">
    <original>C</original>
    <variation>A</variation>
    <variation>S</variation>
    <variation>T</variation>
    <location>
        <position position="193"/>
    </location>
</feature>
<feature type="mutagenesis site" description="Leads to complete loss of cyclodipeptide formation." evidence="1">
    <original>Y</original>
    <variation>A</variation>
    <variation>F</variation>
    <location>
        <position position="392"/>
    </location>
</feature>
<feature type="mutagenesis site" description="Leads to complete loss of cyclodipeptide formation." evidence="1">
    <original>D</original>
    <variation>A</variation>
    <location>
        <position position="428"/>
    </location>
</feature>
<feature type="mutagenesis site" description="Leads to complete loss of cyclodipeptide formation." evidence="1">
    <original>D</original>
    <variation>A</variation>
    <location>
        <position position="429"/>
    </location>
</feature>
<feature type="mutagenesis site" description="Leads to complete loss of cyclodipeptide formation." evidence="1">
    <original>E</original>
    <variation>A</variation>
    <location>
        <position position="432"/>
    </location>
</feature>
<feature type="mutagenesis site" description="Leads to complete loss of cyclodipeptide formation." evidence="1">
    <original>Y</original>
    <variation>A</variation>
    <location>
        <position position="515"/>
    </location>
</feature>
<feature type="mutagenesis site" description="Reduces drastically cyclodipeptide formation." evidence="1">
    <original>Y</original>
    <variation>F</variation>
    <location>
        <position position="515"/>
    </location>
</feature>
<protein>
    <recommendedName>
        <fullName evidence="2">Arginine-containing cyclodipeptide synthase avaA</fullName>
        <shortName evidence="2">RCDPS avaA</shortName>
        <ecNumber evidence="1">6.3.2.-</ecNumber>
    </recommendedName>
    <alternativeName>
        <fullName evidence="2">Ava biosynthesis cluster protein A</fullName>
    </alternativeName>
</protein>
<sequence>MTATVQHTVKTEVCLRGDVASQPISDSKPPTWVAVLQQHEYQSSVTYHKLDDNRLIPDVFGYSYLRDIADQGKKQSTGKQHARVIQAYSKIHSLLSPPWKSSSIDSNTKTRENKGSPVILEDKRCAFIERLEPPPNSKADIVSTVFAQVNLQTPTGPPLEQFLSCRASNIKANDLKNAAEGVRRPITISTGICLFSSRLLGFIPTNGLSVSHDATETVVPPLPYTTVATFYELETCTRMAMTIAGLAVTASTGGTAGSRPIVVRLDVPNLQYYCYPLELLEAGLVSWEYVEEWFRLVDRRHRQVATLLKDTIIHEVRRRNCDVQVDVTSGTIAATQLLRLCVLGRRKIPSVNDMLFVLSWIGPYQAAWREFLAIVDDCQRPKDLRSLALMAYVFEVMYPALQQATTKTKTPHGKGEESSGRPLLIQVDDIAEWRIFDRAEMLLKRFKHRQHGLDPLLVGVFPSPRIFTSEDQGRSTLFLHDPGLKISQTRPPSSGGDSEDHSCVVGPLDIIGQIYGAEVQDTLMRLIIERGLSPEDEFELD</sequence>
<comment type="function">
    <text evidence="1">Arginine-containing cyclodipeptide synthase; part of the cluster that mediates the biosynthesis of a highly modified cyclo-arginine-tryptophan dipeptide (cRW) (PubMed:36702957). Within the pathway, avaA acts as the scaffold-generating enzyme and is responsible for formation of the cyclo-Arg-Trp diketopiperazine (cRW) from L-arginyl-tRNA(Arg) + L-tryptophanyl-tRNA(Trp) (PubMed:36702957). AvaB then acts as a multifunctional flavoenzyme that is responsible for generating the cyclo-Arg-formylkynurenine DKP, which can be deformylated by avaC. AvaB then catalyzes an additional N-oxidation followed by cyclization and dehydration. The next step is an N-acetylation of the guanidine group catalyzed by the arginine N-acetyltransferase AvaD. The role of the additional enzymes identified within the ava cluster still have to be determined (PubMed:36702957).</text>
</comment>
<comment type="catalytic activity">
    <reaction evidence="1">
        <text>L-tryptophyl-tRNA(Trp) + L-arginyl-tRNA(Arg) = cyclo(L-arginyl-L-tryptophyl) + tRNA(Trp) + tRNA(Arg) + H(+)</text>
        <dbReference type="Rhea" id="RHEA:80411"/>
        <dbReference type="Rhea" id="RHEA-COMP:9658"/>
        <dbReference type="Rhea" id="RHEA-COMP:9671"/>
        <dbReference type="Rhea" id="RHEA-COMP:9673"/>
        <dbReference type="Rhea" id="RHEA-COMP:9705"/>
        <dbReference type="ChEBI" id="CHEBI:15378"/>
        <dbReference type="ChEBI" id="CHEBI:78442"/>
        <dbReference type="ChEBI" id="CHEBI:78513"/>
        <dbReference type="ChEBI" id="CHEBI:78535"/>
        <dbReference type="ChEBI" id="CHEBI:231323"/>
    </reaction>
    <physiologicalReaction direction="left-to-right" evidence="1">
        <dbReference type="Rhea" id="RHEA:80412"/>
    </physiologicalReaction>
</comment>
<comment type="pathway">
    <text evidence="1">Secondary metabolite biosynthesis.</text>
</comment>
<comment type="domain">
    <text evidence="1">The conserved DDXXE motif is essential for catalytic activity.</text>
</comment>
<comment type="similarity">
    <text evidence="3">Belongs to the arginine-containing cyclodipeptide synthase family.</text>
</comment>
<accession>P9WEJ7</accession>
<organism>
    <name type="scientific">Aspergillus versicolor</name>
    <dbReference type="NCBI Taxonomy" id="46472"/>
    <lineage>
        <taxon>Eukaryota</taxon>
        <taxon>Fungi</taxon>
        <taxon>Dikarya</taxon>
        <taxon>Ascomycota</taxon>
        <taxon>Pezizomycotina</taxon>
        <taxon>Eurotiomycetes</taxon>
        <taxon>Eurotiomycetidae</taxon>
        <taxon>Eurotiales</taxon>
        <taxon>Aspergillaceae</taxon>
        <taxon>Aspergillus</taxon>
        <taxon>Aspergillus subgen. Nidulantes</taxon>
    </lineage>
</organism>
<name>AVAA_ASPVE</name>
<keyword id="KW-0436">Ligase</keyword>
<proteinExistence type="evidence at protein level"/>
<evidence type="ECO:0000269" key="1">
    <source>
    </source>
</evidence>
<evidence type="ECO:0000303" key="2">
    <source>
    </source>
</evidence>
<evidence type="ECO:0000305" key="3"/>
<dbReference type="EC" id="6.3.2.-" evidence="1"/>
<dbReference type="EMBL" id="OP596311">
    <property type="protein sequence ID" value="UZP48213.1"/>
    <property type="molecule type" value="Genomic_DNA"/>
</dbReference>
<dbReference type="GO" id="GO:0016874">
    <property type="term" value="F:ligase activity"/>
    <property type="evidence" value="ECO:0007669"/>
    <property type="project" value="UniProtKB-KW"/>
</dbReference>
<gene>
    <name evidence="2" type="primary">avaA</name>
</gene>